<comment type="function">
    <text evidence="1">Component of the acetyl coenzyme A carboxylase (ACC) complex. First, biotin carboxylase catalyzes the carboxylation of biotin on its carrier protein (BCCP) and then the CO(2) group is transferred by the carboxyltransferase to acetyl-CoA to form malonyl-CoA.</text>
</comment>
<comment type="catalytic activity">
    <reaction evidence="1">
        <text>N(6)-carboxybiotinyl-L-lysyl-[protein] + acetyl-CoA = N(6)-biotinyl-L-lysyl-[protein] + malonyl-CoA</text>
        <dbReference type="Rhea" id="RHEA:54728"/>
        <dbReference type="Rhea" id="RHEA-COMP:10505"/>
        <dbReference type="Rhea" id="RHEA-COMP:10506"/>
        <dbReference type="ChEBI" id="CHEBI:57288"/>
        <dbReference type="ChEBI" id="CHEBI:57384"/>
        <dbReference type="ChEBI" id="CHEBI:83144"/>
        <dbReference type="ChEBI" id="CHEBI:83145"/>
        <dbReference type="EC" id="2.1.3.15"/>
    </reaction>
</comment>
<comment type="pathway">
    <text evidence="1">Lipid metabolism; malonyl-CoA biosynthesis; malonyl-CoA from acetyl-CoA: step 1/1.</text>
</comment>
<comment type="subunit">
    <text evidence="1">Acetyl-CoA carboxylase is a heterohexamer composed of biotin carboxyl carrier protein (AccB), biotin carboxylase (AccC) and two subunits each of ACCase subunit alpha (AccA) and ACCase subunit beta (AccD).</text>
</comment>
<comment type="subcellular location">
    <subcellularLocation>
        <location evidence="1">Cytoplasm</location>
    </subcellularLocation>
</comment>
<comment type="similarity">
    <text evidence="1">Belongs to the AccA family.</text>
</comment>
<name>ACCA_ALIFM</name>
<proteinExistence type="inferred from homology"/>
<dbReference type="EC" id="2.1.3.15" evidence="1"/>
<dbReference type="EMBL" id="CP001139">
    <property type="protein sequence ID" value="ACH66196.1"/>
    <property type="molecule type" value="Genomic_DNA"/>
</dbReference>
<dbReference type="RefSeq" id="WP_005420529.1">
    <property type="nucleotide sequence ID" value="NC_011184.1"/>
</dbReference>
<dbReference type="SMR" id="B5F9W0"/>
<dbReference type="KEGG" id="vfm:VFMJ11_2080"/>
<dbReference type="HOGENOM" id="CLU_015486_0_2_6"/>
<dbReference type="UniPathway" id="UPA00655">
    <property type="reaction ID" value="UER00711"/>
</dbReference>
<dbReference type="Proteomes" id="UP000001857">
    <property type="component" value="Chromosome I"/>
</dbReference>
<dbReference type="GO" id="GO:0009317">
    <property type="term" value="C:acetyl-CoA carboxylase complex"/>
    <property type="evidence" value="ECO:0007669"/>
    <property type="project" value="InterPro"/>
</dbReference>
<dbReference type="GO" id="GO:0003989">
    <property type="term" value="F:acetyl-CoA carboxylase activity"/>
    <property type="evidence" value="ECO:0007669"/>
    <property type="project" value="InterPro"/>
</dbReference>
<dbReference type="GO" id="GO:0005524">
    <property type="term" value="F:ATP binding"/>
    <property type="evidence" value="ECO:0007669"/>
    <property type="project" value="UniProtKB-KW"/>
</dbReference>
<dbReference type="GO" id="GO:0016743">
    <property type="term" value="F:carboxyl- or carbamoyltransferase activity"/>
    <property type="evidence" value="ECO:0007669"/>
    <property type="project" value="UniProtKB-UniRule"/>
</dbReference>
<dbReference type="GO" id="GO:0006633">
    <property type="term" value="P:fatty acid biosynthetic process"/>
    <property type="evidence" value="ECO:0007669"/>
    <property type="project" value="UniProtKB-KW"/>
</dbReference>
<dbReference type="GO" id="GO:2001295">
    <property type="term" value="P:malonyl-CoA biosynthetic process"/>
    <property type="evidence" value="ECO:0007669"/>
    <property type="project" value="UniProtKB-UniRule"/>
</dbReference>
<dbReference type="FunFam" id="3.90.226.10:FF:000008">
    <property type="entry name" value="Acetyl-coenzyme A carboxylase carboxyl transferase subunit alpha"/>
    <property type="match status" value="1"/>
</dbReference>
<dbReference type="Gene3D" id="3.90.226.10">
    <property type="entry name" value="2-enoyl-CoA Hydratase, Chain A, domain 1"/>
    <property type="match status" value="1"/>
</dbReference>
<dbReference type="HAMAP" id="MF_00823">
    <property type="entry name" value="AcetylCoA_CT_alpha"/>
    <property type="match status" value="1"/>
</dbReference>
<dbReference type="InterPro" id="IPR001095">
    <property type="entry name" value="Acetyl_CoA_COase_a_su"/>
</dbReference>
<dbReference type="InterPro" id="IPR029045">
    <property type="entry name" value="ClpP/crotonase-like_dom_sf"/>
</dbReference>
<dbReference type="InterPro" id="IPR011763">
    <property type="entry name" value="COA_CT_C"/>
</dbReference>
<dbReference type="NCBIfam" id="TIGR00513">
    <property type="entry name" value="accA"/>
    <property type="match status" value="1"/>
</dbReference>
<dbReference type="NCBIfam" id="NF041504">
    <property type="entry name" value="AccA_sub"/>
    <property type="match status" value="1"/>
</dbReference>
<dbReference type="NCBIfam" id="NF004344">
    <property type="entry name" value="PRK05724.1"/>
    <property type="match status" value="1"/>
</dbReference>
<dbReference type="PANTHER" id="PTHR42853">
    <property type="entry name" value="ACETYL-COENZYME A CARBOXYLASE CARBOXYL TRANSFERASE SUBUNIT ALPHA"/>
    <property type="match status" value="1"/>
</dbReference>
<dbReference type="PANTHER" id="PTHR42853:SF3">
    <property type="entry name" value="ACETYL-COENZYME A CARBOXYLASE CARBOXYL TRANSFERASE SUBUNIT ALPHA, CHLOROPLASTIC"/>
    <property type="match status" value="1"/>
</dbReference>
<dbReference type="Pfam" id="PF03255">
    <property type="entry name" value="ACCA"/>
    <property type="match status" value="1"/>
</dbReference>
<dbReference type="PRINTS" id="PR01069">
    <property type="entry name" value="ACCCTRFRASEA"/>
</dbReference>
<dbReference type="SUPFAM" id="SSF52096">
    <property type="entry name" value="ClpP/crotonase"/>
    <property type="match status" value="1"/>
</dbReference>
<dbReference type="PROSITE" id="PS50989">
    <property type="entry name" value="COA_CT_CTER"/>
    <property type="match status" value="1"/>
</dbReference>
<accession>B5F9W0</accession>
<organism>
    <name type="scientific">Aliivibrio fischeri (strain MJ11)</name>
    <name type="common">Vibrio fischeri</name>
    <dbReference type="NCBI Taxonomy" id="388396"/>
    <lineage>
        <taxon>Bacteria</taxon>
        <taxon>Pseudomonadati</taxon>
        <taxon>Pseudomonadota</taxon>
        <taxon>Gammaproteobacteria</taxon>
        <taxon>Vibrionales</taxon>
        <taxon>Vibrionaceae</taxon>
        <taxon>Aliivibrio</taxon>
    </lineage>
</organism>
<reference key="1">
    <citation type="submission" date="2008-08" db="EMBL/GenBank/DDBJ databases">
        <title>Complete sequence of Vibrio fischeri strain MJ11.</title>
        <authorList>
            <person name="Mandel M.J."/>
            <person name="Stabb E.V."/>
            <person name="Ruby E.G."/>
            <person name="Ferriera S."/>
            <person name="Johnson J."/>
            <person name="Kravitz S."/>
            <person name="Beeson K."/>
            <person name="Sutton G."/>
            <person name="Rogers Y.-H."/>
            <person name="Friedman R."/>
            <person name="Frazier M."/>
            <person name="Venter J.C."/>
        </authorList>
    </citation>
    <scope>NUCLEOTIDE SEQUENCE [LARGE SCALE GENOMIC DNA]</scope>
    <source>
        <strain>MJ11</strain>
    </source>
</reference>
<evidence type="ECO:0000255" key="1">
    <source>
        <dbReference type="HAMAP-Rule" id="MF_00823"/>
    </source>
</evidence>
<evidence type="ECO:0000255" key="2">
    <source>
        <dbReference type="PROSITE-ProRule" id="PRU01137"/>
    </source>
</evidence>
<protein>
    <recommendedName>
        <fullName evidence="1">Acetyl-coenzyme A carboxylase carboxyl transferase subunit alpha</fullName>
        <shortName evidence="1">ACCase subunit alpha</shortName>
        <shortName evidence="1">Acetyl-CoA carboxylase carboxyltransferase subunit alpha</shortName>
        <ecNumber evidence="1">2.1.3.15</ecNumber>
    </recommendedName>
</protein>
<sequence>MSLNFLEFEKPIAELEAKVEALREISRRGDENALDLEKEIKQLEDKCLELKKKTFSDLGAWEVAQLARHPERPYVLDYIEHMFTEFDELAGDRAFADDKALVGGIARLDGRPVMVIGHQKGRGTKEKVIRNFGMPKPEGYRKAKRLMQMAERFNMPVITFIDTAGAYPGVGAEERGQSEAIAMNLKIMSELSVPVICNVVGEGGSGGALAIGVGDYVNMLQYSTYSVISPEGCASILWRDSDKAPQAAEAMGLVAPRLKELELIDTIIDEPLGGAHRDHKATAENIKQRLLEQLKELDAFDNEALLERRYQRLMSYGYC</sequence>
<feature type="chain" id="PRO_1000134534" description="Acetyl-coenzyme A carboxylase carboxyl transferase subunit alpha">
    <location>
        <begin position="1"/>
        <end position="319"/>
    </location>
</feature>
<feature type="domain" description="CoA carboxyltransferase C-terminal" evidence="2">
    <location>
        <begin position="35"/>
        <end position="296"/>
    </location>
</feature>
<keyword id="KW-0067">ATP-binding</keyword>
<keyword id="KW-0963">Cytoplasm</keyword>
<keyword id="KW-0275">Fatty acid biosynthesis</keyword>
<keyword id="KW-0276">Fatty acid metabolism</keyword>
<keyword id="KW-0444">Lipid biosynthesis</keyword>
<keyword id="KW-0443">Lipid metabolism</keyword>
<keyword id="KW-0547">Nucleotide-binding</keyword>
<keyword id="KW-0808">Transferase</keyword>
<gene>
    <name evidence="1" type="primary">accA</name>
    <name type="ordered locus">VFMJ11_2080</name>
</gene>